<organism>
    <name type="scientific">Yersinia pseudotuberculosis serotype I (strain IP32953)</name>
    <dbReference type="NCBI Taxonomy" id="273123"/>
    <lineage>
        <taxon>Bacteria</taxon>
        <taxon>Pseudomonadati</taxon>
        <taxon>Pseudomonadota</taxon>
        <taxon>Gammaproteobacteria</taxon>
        <taxon>Enterobacterales</taxon>
        <taxon>Yersiniaceae</taxon>
        <taxon>Yersinia</taxon>
    </lineage>
</organism>
<keyword id="KW-0002">3D-structure</keyword>
<keyword id="KW-0378">Hydrolase</keyword>
<keyword id="KW-0614">Plasmid</keyword>
<keyword id="KW-0904">Protein phosphatase</keyword>
<keyword id="KW-0964">Secreted</keyword>
<keyword id="KW-0843">Virulence</keyword>
<gene>
    <name type="primary">yopH</name>
    <name type="synonym">yop2b</name>
    <name type="ordered locus">pYV0094</name>
</gene>
<protein>
    <recommendedName>
        <fullName>Tyrosine-protein phosphatase YopH</fullName>
        <ecNumber>3.1.3.48</ecNumber>
    </recommendedName>
    <alternativeName>
        <fullName>Virulence protein</fullName>
    </alternativeName>
</protein>
<comment type="function">
    <text evidence="4">Essential virulence determinant. This protein is a protein tyrosine phosphatase. The essential function of YopH in Yersinia pathogenesis is host-protein dephosphorylation. It contributes to the ability of the bacteria to resist phagocytosis by peritoneal macrophages.</text>
</comment>
<comment type="catalytic activity">
    <reaction evidence="2 4">
        <text>O-phospho-L-tyrosyl-[protein] + H2O = L-tyrosyl-[protein] + phosphate</text>
        <dbReference type="Rhea" id="RHEA:10684"/>
        <dbReference type="Rhea" id="RHEA-COMP:10136"/>
        <dbReference type="Rhea" id="RHEA-COMP:20101"/>
        <dbReference type="ChEBI" id="CHEBI:15377"/>
        <dbReference type="ChEBI" id="CHEBI:43474"/>
        <dbReference type="ChEBI" id="CHEBI:46858"/>
        <dbReference type="ChEBI" id="CHEBI:61978"/>
        <dbReference type="EC" id="3.1.3.48"/>
    </reaction>
</comment>
<comment type="subcellular location">
    <subcellularLocation>
        <location>Secreted</location>
    </subcellularLocation>
    <text>Secreted via type III secretion system.</text>
</comment>
<comment type="induction">
    <text>At 37 degrees Celsius in the absence of calcium.</text>
</comment>
<comment type="similarity">
    <text evidence="5">Belongs to the protein-tyrosine phosphatase family. Non-receptor class subfamily.</text>
</comment>
<reference key="1">
    <citation type="journal article" date="1988" name="Mol. Microbiol.">
        <title>The plasmid-encoded Yop2b protein of Yersinia pseudotuberculosis is a virulence determinant regulated by calcium and temperature at the level of transcription.</title>
        <authorList>
            <person name="Boelin I."/>
            <person name="Wolf-Watz H."/>
        </authorList>
    </citation>
    <scope>NUCLEOTIDE SEQUENCE [GENOMIC DNA]</scope>
    <source>
        <strain>YPIII / Serotype O:3</strain>
        <plasmid>pIB1</plasmid>
    </source>
</reference>
<reference key="2">
    <citation type="journal article" date="2004" name="Proc. Natl. Acad. Sci. U.S.A.">
        <title>Insights into the evolution of Yersinia pestis through whole-genome comparison with Yersinia pseudotuberculosis.</title>
        <authorList>
            <person name="Chain P.S.G."/>
            <person name="Carniel E."/>
            <person name="Larimer F.W."/>
            <person name="Lamerdin J."/>
            <person name="Stoutland P.O."/>
            <person name="Regala W.M."/>
            <person name="Georgescu A.M."/>
            <person name="Vergez L.M."/>
            <person name="Land M.L."/>
            <person name="Motin V.L."/>
            <person name="Brubaker R.R."/>
            <person name="Fowler J."/>
            <person name="Hinnebusch J."/>
            <person name="Marceau M."/>
            <person name="Medigue C."/>
            <person name="Simonet M."/>
            <person name="Chenal-Francisque V."/>
            <person name="Souza B."/>
            <person name="Dacheux D."/>
            <person name="Elliott J.M."/>
            <person name="Derbise A."/>
            <person name="Hauser L.J."/>
            <person name="Garcia E."/>
        </authorList>
    </citation>
    <scope>NUCLEOTIDE SEQUENCE [LARGE SCALE GENOMIC DNA]</scope>
    <source>
        <strain>IP32953</strain>
        <plasmid>pYV</plasmid>
    </source>
</reference>
<reference key="3">
    <citation type="journal article" date="1991" name="Proc. Natl. Acad. Sci. U.S.A.">
        <title>Tyrosine phosphate hydrolysis of host proteins by an essential Yersinia virulence determinant.</title>
        <authorList>
            <person name="Bliska J.B."/>
            <person name="Guan K.L."/>
            <person name="Dixon J.E."/>
            <person name="Falkow S."/>
        </authorList>
    </citation>
    <scope>FUNCTION</scope>
    <scope>CATALYTIC ACTIVITY</scope>
    <scope>MUTAGENESIS</scope>
</reference>
<reference key="4">
    <citation type="journal article" date="2001" name="Mol. Microbiol.">
        <title>Structure of the type III secretion and substrate-binding domain of Yersinia YopH phosphatase.</title>
        <authorList>
            <person name="Smith C.L."/>
            <person name="Khandelwal P."/>
            <person name="Keliikuli K."/>
            <person name="Zuiderweg E.R."/>
            <person name="Saper M.A."/>
        </authorList>
    </citation>
    <scope>X-RAY CRYSTALLOGRAPHY (2.2 ANGSTROMS) OF 1-129</scope>
</reference>
<reference key="5">
    <citation type="journal article" date="2002" name="Biochemistry">
        <title>Solution structure and phosphopeptide binding to the N-terminal domain of Yersinia YopH: comparison with a crystal structure.</title>
        <authorList>
            <person name="Khandelwal P."/>
            <person name="Keliikuli K."/>
            <person name="Smith C.L."/>
            <person name="Saper M.A."/>
            <person name="Zuiderweg E.R."/>
        </authorList>
    </citation>
    <scope>STRUCTURE BY NMR OF 1-129</scope>
</reference>
<dbReference type="EC" id="3.1.3.48"/>
<dbReference type="EMBL" id="Y00551">
    <property type="protein sequence ID" value="CAA68629.1"/>
    <property type="molecule type" value="Genomic_DNA"/>
</dbReference>
<dbReference type="EMBL" id="BX936399">
    <property type="protein sequence ID" value="CAF25437.1"/>
    <property type="molecule type" value="Genomic_DNA"/>
</dbReference>
<dbReference type="PIR" id="S01054">
    <property type="entry name" value="S01054"/>
</dbReference>
<dbReference type="RefSeq" id="WP_002213278.1">
    <property type="nucleotide sequence ID" value="NZ_CP009711.1"/>
</dbReference>
<dbReference type="PDB" id="1K46">
    <property type="method" value="X-ray"/>
    <property type="resolution" value="2.20 A"/>
    <property type="chains" value="A=1-129"/>
</dbReference>
<dbReference type="PDB" id="1M0V">
    <property type="method" value="NMR"/>
    <property type="chains" value="A=1-129"/>
</dbReference>
<dbReference type="PDBsum" id="1K46"/>
<dbReference type="PDBsum" id="1M0V"/>
<dbReference type="BMRB" id="P08538"/>
<dbReference type="SASBDB" id="P08538"/>
<dbReference type="SMR" id="P08538"/>
<dbReference type="IntAct" id="P08538">
    <property type="interactions" value="1"/>
</dbReference>
<dbReference type="ChEMBL" id="CHEMBL5835"/>
<dbReference type="KEGG" id="ypo:BZ17_4241"/>
<dbReference type="KEGG" id="yps:pYV0094"/>
<dbReference type="PATRIC" id="fig|273123.14.peg.4476"/>
<dbReference type="EvolutionaryTrace" id="P08538"/>
<dbReference type="PRO" id="PR:P08538"/>
<dbReference type="Proteomes" id="UP000001011">
    <property type="component" value="Plasmid pYV"/>
</dbReference>
<dbReference type="GO" id="GO:0005576">
    <property type="term" value="C:extracellular region"/>
    <property type="evidence" value="ECO:0007669"/>
    <property type="project" value="UniProtKB-SubCell"/>
</dbReference>
<dbReference type="GO" id="GO:0004725">
    <property type="term" value="F:protein tyrosine phosphatase activity"/>
    <property type="evidence" value="ECO:0007669"/>
    <property type="project" value="UniProtKB-EC"/>
</dbReference>
<dbReference type="CDD" id="cd14559">
    <property type="entry name" value="PTP_YopH-like"/>
    <property type="match status" value="1"/>
</dbReference>
<dbReference type="Gene3D" id="3.90.190.10">
    <property type="entry name" value="Protein tyrosine phosphatase superfamily"/>
    <property type="match status" value="1"/>
</dbReference>
<dbReference type="Gene3D" id="3.30.1570.10">
    <property type="entry name" value="Protein-tyrosine phosphatase, YopH, N-terminal domain"/>
    <property type="match status" value="1"/>
</dbReference>
<dbReference type="InterPro" id="IPR029021">
    <property type="entry name" value="Prot-tyrosine_phosphatase-like"/>
</dbReference>
<dbReference type="InterPro" id="IPR050348">
    <property type="entry name" value="Protein-Tyr_Phosphatase"/>
</dbReference>
<dbReference type="InterPro" id="IPR015103">
    <property type="entry name" value="ProtTyrPase_YopH_N"/>
</dbReference>
<dbReference type="InterPro" id="IPR036484">
    <property type="entry name" value="ProtTyrPase_YopH_N_sf"/>
</dbReference>
<dbReference type="InterPro" id="IPR000242">
    <property type="entry name" value="PTP_cat"/>
</dbReference>
<dbReference type="InterPro" id="IPR016130">
    <property type="entry name" value="Tyr_Pase_AS"/>
</dbReference>
<dbReference type="InterPro" id="IPR003595">
    <property type="entry name" value="Tyr_Pase_cat"/>
</dbReference>
<dbReference type="InterPro" id="IPR000387">
    <property type="entry name" value="Tyr_Pase_dom"/>
</dbReference>
<dbReference type="InterPro" id="IPR003546">
    <property type="entry name" value="Tyr_Pase_SptP/YopH"/>
</dbReference>
<dbReference type="PANTHER" id="PTHR19134">
    <property type="entry name" value="RECEPTOR-TYPE TYROSINE-PROTEIN PHOSPHATASE"/>
    <property type="match status" value="1"/>
</dbReference>
<dbReference type="PANTHER" id="PTHR19134:SF449">
    <property type="entry name" value="TYROSINE-PROTEIN PHOSPHATASE 1"/>
    <property type="match status" value="1"/>
</dbReference>
<dbReference type="Pfam" id="PF00102">
    <property type="entry name" value="Y_phosphatase"/>
    <property type="match status" value="1"/>
</dbReference>
<dbReference type="Pfam" id="PF09013">
    <property type="entry name" value="YopH_N"/>
    <property type="match status" value="1"/>
</dbReference>
<dbReference type="PRINTS" id="PR01371">
    <property type="entry name" value="BACYPHPHTASE"/>
</dbReference>
<dbReference type="PRINTS" id="PR00700">
    <property type="entry name" value="PRTYPHPHTASE"/>
</dbReference>
<dbReference type="SMART" id="SM00194">
    <property type="entry name" value="PTPc"/>
    <property type="match status" value="1"/>
</dbReference>
<dbReference type="SMART" id="SM00404">
    <property type="entry name" value="PTPc_motif"/>
    <property type="match status" value="1"/>
</dbReference>
<dbReference type="SUPFAM" id="SSF52799">
    <property type="entry name" value="(Phosphotyrosine protein) phosphatases II"/>
    <property type="match status" value="1"/>
</dbReference>
<dbReference type="SUPFAM" id="SSF64449">
    <property type="entry name" value="YopH tyrosine phosphatase N-terminal domain"/>
    <property type="match status" value="1"/>
</dbReference>
<dbReference type="PROSITE" id="PS00383">
    <property type="entry name" value="TYR_PHOSPHATASE_1"/>
    <property type="match status" value="1"/>
</dbReference>
<dbReference type="PROSITE" id="PS50056">
    <property type="entry name" value="TYR_PHOSPHATASE_2"/>
    <property type="match status" value="1"/>
</dbReference>
<dbReference type="PROSITE" id="PS50055">
    <property type="entry name" value="TYR_PHOSPHATASE_PTP"/>
    <property type="match status" value="1"/>
</dbReference>
<sequence length="468" mass="50869">MNLSLSDLHRQVSRLVQQESGDCTGKLRGNVAANKETTFQGLTIASGARESEKVFAQTVLSHVANVVLTQEDTAKLLQSTVKHNLNNYDLRSVGNGNSVLVSLRSDQMTLQDAKVLLEAALRQESGARGHVSSHSHSALHAPGTPVREGLRSHLDPRTPPLPPRERPHTSGHHGAGEARATAPSTVSPYGPEARAELSSRLTTLRNTLAPATNDPRYLQACGGEKLNRFRDIQCCRQTAVRADLNANYIQVGNTRTIACQYPLQSQLESHFRMLAENRTPVLAVLASSSEIANQRFGMPDYFRQSGTYGSITVESKMTQQVGLGDGIMADMYTLTIREAGQKTISVPVVHVGNWPDQTAVSSEVTKALASLVDQTAETKRNMYESKGSSAVGDDSKLRPVIHCRAGVGRTAQLIGAMCMNDSRNSQLSVEDMVSQMRVQRNGIMVQKDEQLDVLIKLAEGQGRPLLNS</sequence>
<proteinExistence type="evidence at protein level"/>
<feature type="chain" id="PRO_0000094862" description="Tyrosine-protein phosphatase YopH">
    <location>
        <begin position="1"/>
        <end position="468"/>
    </location>
</feature>
<feature type="domain" description="Tyrosine-protein phosphatase" evidence="1">
    <location>
        <begin position="152"/>
        <end position="461"/>
    </location>
</feature>
<feature type="region of interest" description="Disordered" evidence="3">
    <location>
        <begin position="127"/>
        <end position="194"/>
    </location>
</feature>
<feature type="compositionally biased region" description="Low complexity" evidence="3">
    <location>
        <begin position="130"/>
        <end position="141"/>
    </location>
</feature>
<feature type="active site" description="Phosphocysteine intermediate">
    <location>
        <position position="403"/>
    </location>
</feature>
<feature type="mutagenesis site" description="Abolishes PTPase activity and significantly reduces the virulence." evidence="4">
    <original>C</original>
    <variation>A</variation>
    <location>
        <position position="403"/>
    </location>
</feature>
<feature type="sequence conflict" description="In Ref. 1; CAA68629." evidence="5" ref="1">
    <original>A</original>
    <variation>R</variation>
    <location>
        <position position="211"/>
    </location>
</feature>
<feature type="helix" evidence="6">
    <location>
        <begin position="5"/>
        <end position="17"/>
    </location>
</feature>
<feature type="strand" evidence="7">
    <location>
        <begin position="24"/>
        <end position="34"/>
    </location>
</feature>
<feature type="helix" evidence="6">
    <location>
        <begin position="44"/>
        <end position="46"/>
    </location>
</feature>
<feature type="helix" evidence="6">
    <location>
        <begin position="50"/>
        <end position="62"/>
    </location>
</feature>
<feature type="turn" evidence="6">
    <location>
        <begin position="63"/>
        <end position="65"/>
    </location>
</feature>
<feature type="helix" evidence="6">
    <location>
        <begin position="70"/>
        <end position="82"/>
    </location>
</feature>
<feature type="strand" evidence="6">
    <location>
        <begin position="88"/>
        <end position="94"/>
    </location>
</feature>
<feature type="strand" evidence="6">
    <location>
        <begin position="97"/>
        <end position="106"/>
    </location>
</feature>
<feature type="helix" evidence="6">
    <location>
        <begin position="110"/>
        <end position="124"/>
    </location>
</feature>
<feature type="strand" evidence="7">
    <location>
        <begin position="126"/>
        <end position="128"/>
    </location>
</feature>
<name>YOPH_YERPS</name>
<evidence type="ECO:0000255" key="1">
    <source>
        <dbReference type="PROSITE-ProRule" id="PRU00160"/>
    </source>
</evidence>
<evidence type="ECO:0000255" key="2">
    <source>
        <dbReference type="PROSITE-ProRule" id="PRU10044"/>
    </source>
</evidence>
<evidence type="ECO:0000256" key="3">
    <source>
        <dbReference type="SAM" id="MobiDB-lite"/>
    </source>
</evidence>
<evidence type="ECO:0000269" key="4">
    <source>
    </source>
</evidence>
<evidence type="ECO:0000305" key="5"/>
<evidence type="ECO:0007829" key="6">
    <source>
        <dbReference type="PDB" id="1K46"/>
    </source>
</evidence>
<evidence type="ECO:0007829" key="7">
    <source>
        <dbReference type="PDB" id="1M0V"/>
    </source>
</evidence>
<geneLocation type="plasmid">
    <name>pIB1</name>
</geneLocation>
<geneLocation type="plasmid">
    <name>pYV</name>
</geneLocation>
<accession>P08538</accession>
<accession>Q663H2</accession>